<evidence type="ECO:0000250" key="1"/>
<evidence type="ECO:0000250" key="2">
    <source>
        <dbReference type="UniProtKB" id="P0AB89"/>
    </source>
</evidence>
<evidence type="ECO:0000305" key="3"/>
<evidence type="ECO:0007829" key="4">
    <source>
        <dbReference type="PDB" id="7T24"/>
    </source>
</evidence>
<evidence type="ECO:0007829" key="5">
    <source>
        <dbReference type="PDB" id="7T29"/>
    </source>
</evidence>
<comment type="function">
    <text evidence="2">Catalyzes two reactions in de novo purine nucleotide biosynthesis. Catalyzes the breakdown of 5-aminoimidazole- (N-succinylocarboxamide) ribotide (SAICAR or 2-[5-amino-1-(5-phospho-beta-D-ribosyl)imidazole-4-carboxamido]succinate) to 5-aminoimidazole-4-carboxamide ribotide (AICAR or 5-amino-1-(5-phospho-beta-D-ribosyl)imidazole-4-carboxamide) and fumarate, and of adenylosuccinate (ADS or N(6)-(1,2-dicarboxyethyl)-AMP) to adenosine monophosphate (AMP) and fumarate.</text>
</comment>
<comment type="catalytic activity">
    <reaction evidence="2">
        <text>N(6)-(1,2-dicarboxyethyl)-AMP = fumarate + AMP</text>
        <dbReference type="Rhea" id="RHEA:16853"/>
        <dbReference type="ChEBI" id="CHEBI:29806"/>
        <dbReference type="ChEBI" id="CHEBI:57567"/>
        <dbReference type="ChEBI" id="CHEBI:456215"/>
        <dbReference type="EC" id="4.3.2.2"/>
    </reaction>
    <physiologicalReaction direction="left-to-right" evidence="2">
        <dbReference type="Rhea" id="RHEA:16854"/>
    </physiologicalReaction>
</comment>
<comment type="catalytic activity">
    <reaction evidence="2">
        <text>(2S)-2-[5-amino-1-(5-phospho-beta-D-ribosyl)imidazole-4-carboxamido]succinate = 5-amino-1-(5-phospho-beta-D-ribosyl)imidazole-4-carboxamide + fumarate</text>
        <dbReference type="Rhea" id="RHEA:23920"/>
        <dbReference type="ChEBI" id="CHEBI:29806"/>
        <dbReference type="ChEBI" id="CHEBI:58443"/>
        <dbReference type="ChEBI" id="CHEBI:58475"/>
        <dbReference type="EC" id="4.3.2.2"/>
    </reaction>
    <physiologicalReaction direction="left-to-right" evidence="2">
        <dbReference type="Rhea" id="RHEA:23921"/>
    </physiologicalReaction>
</comment>
<comment type="pathway">
    <text>Purine metabolism; AMP biosynthesis via de novo pathway; AMP from IMP: step 2/2.</text>
</comment>
<comment type="pathway">
    <text>Purine metabolism; IMP biosynthesis via de novo pathway; 5-amino-1-(5-phospho-D-ribosyl)imidazole-4-carboxamide from 5-amino-1-(5-phospho-D-ribosyl)imidazole-4-carboxylate: step 2/2.</text>
</comment>
<comment type="subunit">
    <text evidence="1">Homotetramer. Residues from neighboring subunits contribute catalytic and substrate-binding residues to each active site (By similarity).</text>
</comment>
<comment type="similarity">
    <text evidence="3">Belongs to the lyase 1 family. Adenylosuccinate lyase subfamily.</text>
</comment>
<sequence length="456" mass="50501">MQLSSLTAVSPVDGRYAGKTSSLRPIFSEYGLIRFRVMVEVRWLQRLAAHAGIPEVAPFSAEANALLDSLASDFQLEHAERIKEIERTTNHDVKAVEYLLKEQAAKLPELAAVSEFIHFACTSEDINNLSHALMLREGRDSVLLPLMRQIAEAIRELAVKLADVPMLSRTHGQPASPTTLGKELANVVYRLERQIKQVAGIELLGKINGAVGNYNAHLSAYPEVDWEANARQFIEGDLGLTFNPYTTQIEPHDYIAELFDAIARFNTILIDFDRDVWGYISLGYFKQKTVAGEIGSSTMPHKVNPIDFENSEGNLGIANALFQHLASKLPISRWQRDLTDSTVLRNLGVGIAHSIIAYEASLKGIGKLELNAQRIAEDLDACWEVLAEPVQTVMRRYGVENPYEKLKELTRGKGISAEALQTFIEELAIPAEAKVELKKLTPAGYVGNAAAQAKRI</sequence>
<gene>
    <name type="primary">purB</name>
    <name type="ordered locus">PA2629</name>
</gene>
<keyword id="KW-0002">3D-structure</keyword>
<keyword id="KW-0456">Lyase</keyword>
<keyword id="KW-0658">Purine biosynthesis</keyword>
<keyword id="KW-1185">Reference proteome</keyword>
<name>PUR8_PSEAE</name>
<reference key="1">
    <citation type="journal article" date="2000" name="Nature">
        <title>Complete genome sequence of Pseudomonas aeruginosa PAO1, an opportunistic pathogen.</title>
        <authorList>
            <person name="Stover C.K."/>
            <person name="Pham X.-Q.T."/>
            <person name="Erwin A.L."/>
            <person name="Mizoguchi S.D."/>
            <person name="Warrener P."/>
            <person name="Hickey M.J."/>
            <person name="Brinkman F.S.L."/>
            <person name="Hufnagle W.O."/>
            <person name="Kowalik D.J."/>
            <person name="Lagrou M."/>
            <person name="Garber R.L."/>
            <person name="Goltry L."/>
            <person name="Tolentino E."/>
            <person name="Westbrock-Wadman S."/>
            <person name="Yuan Y."/>
            <person name="Brody L.L."/>
            <person name="Coulter S.N."/>
            <person name="Folger K.R."/>
            <person name="Kas A."/>
            <person name="Larbig K."/>
            <person name="Lim R.M."/>
            <person name="Smith K.A."/>
            <person name="Spencer D.H."/>
            <person name="Wong G.K.-S."/>
            <person name="Wu Z."/>
            <person name="Paulsen I.T."/>
            <person name="Reizer J."/>
            <person name="Saier M.H. Jr."/>
            <person name="Hancock R.E.W."/>
            <person name="Lory S."/>
            <person name="Olson M.V."/>
        </authorList>
    </citation>
    <scope>NUCLEOTIDE SEQUENCE [LARGE SCALE GENOMIC DNA]</scope>
    <source>
        <strain>ATCC 15692 / DSM 22644 / CIP 104116 / JCM 14847 / LMG 12228 / 1C / PRS 101 / PAO1</strain>
    </source>
</reference>
<proteinExistence type="evidence at protein level"/>
<accession>Q9I0K9</accession>
<protein>
    <recommendedName>
        <fullName>Adenylosuccinate lyase</fullName>
        <shortName>ASL</shortName>
        <ecNumber evidence="2">4.3.2.2</ecNumber>
    </recommendedName>
    <alternativeName>
        <fullName>Adenylosuccinase</fullName>
        <shortName>ASase</shortName>
    </alternativeName>
</protein>
<organism>
    <name type="scientific">Pseudomonas aeruginosa (strain ATCC 15692 / DSM 22644 / CIP 104116 / JCM 14847 / LMG 12228 / 1C / PRS 101 / PAO1)</name>
    <dbReference type="NCBI Taxonomy" id="208964"/>
    <lineage>
        <taxon>Bacteria</taxon>
        <taxon>Pseudomonadati</taxon>
        <taxon>Pseudomonadota</taxon>
        <taxon>Gammaproteobacteria</taxon>
        <taxon>Pseudomonadales</taxon>
        <taxon>Pseudomonadaceae</taxon>
        <taxon>Pseudomonas</taxon>
    </lineage>
</organism>
<dbReference type="EC" id="4.3.2.2" evidence="2"/>
<dbReference type="EMBL" id="AE004091">
    <property type="protein sequence ID" value="AAG06017.1"/>
    <property type="molecule type" value="Genomic_DNA"/>
</dbReference>
<dbReference type="PIR" id="F83317">
    <property type="entry name" value="F83317"/>
</dbReference>
<dbReference type="RefSeq" id="NP_251319.1">
    <property type="nucleotide sequence ID" value="NC_002516.2"/>
</dbReference>
<dbReference type="RefSeq" id="WP_003113371.1">
    <property type="nucleotide sequence ID" value="NZ_QZGE01000008.1"/>
</dbReference>
<dbReference type="PDB" id="7T24">
    <property type="method" value="X-ray"/>
    <property type="resolution" value="1.45 A"/>
    <property type="chains" value="A=1-456"/>
</dbReference>
<dbReference type="PDB" id="7T29">
    <property type="method" value="X-ray"/>
    <property type="resolution" value="1.50 A"/>
    <property type="chains" value="A=1-456"/>
</dbReference>
<dbReference type="PDBsum" id="7T24"/>
<dbReference type="PDBsum" id="7T29"/>
<dbReference type="SMR" id="Q9I0K9"/>
<dbReference type="FunCoup" id="Q9I0K9">
    <property type="interactions" value="738"/>
</dbReference>
<dbReference type="STRING" id="208964.PA2629"/>
<dbReference type="PaxDb" id="208964-PA2629"/>
<dbReference type="GeneID" id="882336"/>
<dbReference type="KEGG" id="pae:PA2629"/>
<dbReference type="PATRIC" id="fig|208964.12.peg.2751"/>
<dbReference type="PseudoCAP" id="PA2629"/>
<dbReference type="HOGENOM" id="CLU_025566_2_0_6"/>
<dbReference type="InParanoid" id="Q9I0K9"/>
<dbReference type="OrthoDB" id="9768878at2"/>
<dbReference type="PhylomeDB" id="Q9I0K9"/>
<dbReference type="BioCyc" id="PAER208964:G1FZ6-2669-MONOMER"/>
<dbReference type="UniPathway" id="UPA00074">
    <property type="reaction ID" value="UER00132"/>
</dbReference>
<dbReference type="UniPathway" id="UPA00075">
    <property type="reaction ID" value="UER00336"/>
</dbReference>
<dbReference type="Proteomes" id="UP000002438">
    <property type="component" value="Chromosome"/>
</dbReference>
<dbReference type="GO" id="GO:0005829">
    <property type="term" value="C:cytosol"/>
    <property type="evidence" value="ECO:0000318"/>
    <property type="project" value="GO_Central"/>
</dbReference>
<dbReference type="GO" id="GO:0070626">
    <property type="term" value="F:(S)-2-(5-amino-1-(5-phospho-D-ribosyl)imidazole-4-carboxamido) succinate lyase (fumarate-forming) activity"/>
    <property type="evidence" value="ECO:0007669"/>
    <property type="project" value="RHEA"/>
</dbReference>
<dbReference type="GO" id="GO:0004018">
    <property type="term" value="F:N6-(1,2-dicarboxyethyl)AMP AMP-lyase (fumarate-forming) activity"/>
    <property type="evidence" value="ECO:0007669"/>
    <property type="project" value="InterPro"/>
</dbReference>
<dbReference type="GO" id="GO:0044208">
    <property type="term" value="P:'de novo' AMP biosynthetic process"/>
    <property type="evidence" value="ECO:0007669"/>
    <property type="project" value="UniProtKB-UniPathway"/>
</dbReference>
<dbReference type="GO" id="GO:0006189">
    <property type="term" value="P:'de novo' IMP biosynthetic process"/>
    <property type="evidence" value="ECO:0007669"/>
    <property type="project" value="UniProtKB-UniPathway"/>
</dbReference>
<dbReference type="CDD" id="cd01598">
    <property type="entry name" value="PurB"/>
    <property type="match status" value="1"/>
</dbReference>
<dbReference type="FunFam" id="1.10.275.10:FF:000003">
    <property type="entry name" value="Adenylosuccinate lyase"/>
    <property type="match status" value="1"/>
</dbReference>
<dbReference type="FunFam" id="1.10.40.30:FF:000004">
    <property type="entry name" value="Adenylosuccinate lyase"/>
    <property type="match status" value="1"/>
</dbReference>
<dbReference type="FunFam" id="1.20.200.10:FF:000004">
    <property type="entry name" value="Adenylosuccinate lyase"/>
    <property type="match status" value="1"/>
</dbReference>
<dbReference type="Gene3D" id="1.10.40.30">
    <property type="entry name" value="Fumarase/aspartase (C-terminal domain)"/>
    <property type="match status" value="1"/>
</dbReference>
<dbReference type="Gene3D" id="1.20.200.10">
    <property type="entry name" value="Fumarase/aspartase (Central domain)"/>
    <property type="match status" value="1"/>
</dbReference>
<dbReference type="Gene3D" id="1.10.275.10">
    <property type="entry name" value="Fumarase/aspartase (N-terminal domain)"/>
    <property type="match status" value="1"/>
</dbReference>
<dbReference type="InterPro" id="IPR024083">
    <property type="entry name" value="Fumarase/histidase_N"/>
</dbReference>
<dbReference type="InterPro" id="IPR020557">
    <property type="entry name" value="Fumarate_lyase_CS"/>
</dbReference>
<dbReference type="InterPro" id="IPR000362">
    <property type="entry name" value="Fumarate_lyase_fam"/>
</dbReference>
<dbReference type="InterPro" id="IPR022761">
    <property type="entry name" value="Fumarate_lyase_N"/>
</dbReference>
<dbReference type="InterPro" id="IPR008948">
    <property type="entry name" value="L-Aspartase-like"/>
</dbReference>
<dbReference type="InterPro" id="IPR004769">
    <property type="entry name" value="Pur_lyase"/>
</dbReference>
<dbReference type="InterPro" id="IPR047136">
    <property type="entry name" value="PurB_bact"/>
</dbReference>
<dbReference type="InterPro" id="IPR013539">
    <property type="entry name" value="PurB_C"/>
</dbReference>
<dbReference type="NCBIfam" id="NF006764">
    <property type="entry name" value="PRK09285.1"/>
    <property type="match status" value="1"/>
</dbReference>
<dbReference type="NCBIfam" id="TIGR00928">
    <property type="entry name" value="purB"/>
    <property type="match status" value="1"/>
</dbReference>
<dbReference type="PANTHER" id="PTHR43411">
    <property type="entry name" value="ADENYLOSUCCINATE LYASE"/>
    <property type="match status" value="1"/>
</dbReference>
<dbReference type="PANTHER" id="PTHR43411:SF1">
    <property type="entry name" value="ADENYLOSUCCINATE LYASE"/>
    <property type="match status" value="1"/>
</dbReference>
<dbReference type="Pfam" id="PF08328">
    <property type="entry name" value="ASL_C"/>
    <property type="match status" value="1"/>
</dbReference>
<dbReference type="Pfam" id="PF00206">
    <property type="entry name" value="Lyase_1"/>
    <property type="match status" value="1"/>
</dbReference>
<dbReference type="PRINTS" id="PR00149">
    <property type="entry name" value="FUMRATELYASE"/>
</dbReference>
<dbReference type="SUPFAM" id="SSF48557">
    <property type="entry name" value="L-aspartase-like"/>
    <property type="match status" value="1"/>
</dbReference>
<dbReference type="PROSITE" id="PS00163">
    <property type="entry name" value="FUMARATE_LYASES"/>
    <property type="match status" value="1"/>
</dbReference>
<feature type="chain" id="PRO_0000287829" description="Adenylosuccinate lyase">
    <location>
        <begin position="1"/>
        <end position="456"/>
    </location>
</feature>
<feature type="active site" description="Proton donor/acceptor" evidence="2">
    <location>
        <position position="171"/>
    </location>
</feature>
<feature type="active site" description="Proton donor/acceptor" evidence="2">
    <location>
        <position position="296"/>
    </location>
</feature>
<feature type="binding site" evidence="2">
    <location>
        <begin position="15"/>
        <end position="16"/>
    </location>
    <ligand>
        <name>N(6)-(1,2-dicarboxyethyl)-AMP</name>
        <dbReference type="ChEBI" id="CHEBI:57567"/>
    </ligand>
</feature>
<feature type="binding site" evidence="2">
    <location>
        <begin position="90"/>
        <end position="92"/>
    </location>
    <ligand>
        <name>N(6)-(1,2-dicarboxyethyl)-AMP</name>
        <dbReference type="ChEBI" id="CHEBI:57567"/>
    </ligand>
</feature>
<feature type="binding site" evidence="2">
    <location>
        <begin position="122"/>
        <end position="123"/>
    </location>
    <ligand>
        <name>N(6)-(1,2-dicarboxyethyl)-AMP</name>
        <dbReference type="ChEBI" id="CHEBI:57567"/>
    </ligand>
</feature>
<feature type="binding site" evidence="2">
    <location>
        <position position="248"/>
    </location>
    <ligand>
        <name>N(6)-(1,2-dicarboxyethyl)-AMP</name>
        <dbReference type="ChEBI" id="CHEBI:57567"/>
    </ligand>
</feature>
<feature type="binding site" evidence="2">
    <location>
        <position position="297"/>
    </location>
    <ligand>
        <name>N(6)-(1,2-dicarboxyethyl)-AMP</name>
        <dbReference type="ChEBI" id="CHEBI:57567"/>
    </ligand>
</feature>
<feature type="binding site" evidence="2">
    <location>
        <begin position="302"/>
        <end position="304"/>
    </location>
    <ligand>
        <name>N(6)-(1,2-dicarboxyethyl)-AMP</name>
        <dbReference type="ChEBI" id="CHEBI:57567"/>
    </ligand>
</feature>
<feature type="binding site" evidence="2">
    <location>
        <position position="310"/>
    </location>
    <ligand>
        <name>N(6)-(1,2-dicarboxyethyl)-AMP</name>
        <dbReference type="ChEBI" id="CHEBI:57567"/>
    </ligand>
</feature>
<feature type="binding site" evidence="2">
    <location>
        <position position="336"/>
    </location>
    <ligand>
        <name>N(6)-(1,2-dicarboxyethyl)-AMP</name>
        <dbReference type="ChEBI" id="CHEBI:57567"/>
    </ligand>
</feature>
<feature type="binding site" evidence="2">
    <location>
        <begin position="341"/>
        <end position="345"/>
    </location>
    <ligand>
        <name>N(6)-(1,2-dicarboxyethyl)-AMP</name>
        <dbReference type="ChEBI" id="CHEBI:57567"/>
    </ligand>
</feature>
<feature type="turn" evidence="4">
    <location>
        <begin position="5"/>
        <end position="7"/>
    </location>
</feature>
<feature type="turn" evidence="4">
    <location>
        <begin position="11"/>
        <end position="16"/>
    </location>
</feature>
<feature type="helix" evidence="4">
    <location>
        <begin position="17"/>
        <end position="20"/>
    </location>
</feature>
<feature type="helix" evidence="4">
    <location>
        <begin position="21"/>
        <end position="23"/>
    </location>
</feature>
<feature type="turn" evidence="4">
    <location>
        <begin position="24"/>
        <end position="26"/>
    </location>
</feature>
<feature type="helix" evidence="4">
    <location>
        <begin position="29"/>
        <end position="49"/>
    </location>
</feature>
<feature type="helix" evidence="4">
    <location>
        <begin position="61"/>
        <end position="72"/>
    </location>
</feature>
<feature type="helix" evidence="4">
    <location>
        <begin position="76"/>
        <end position="89"/>
    </location>
</feature>
<feature type="helix" evidence="4">
    <location>
        <begin position="92"/>
        <end position="104"/>
    </location>
</feature>
<feature type="helix" evidence="4">
    <location>
        <begin position="108"/>
        <end position="111"/>
    </location>
</feature>
<feature type="helix" evidence="4">
    <location>
        <begin position="112"/>
        <end position="116"/>
    </location>
</feature>
<feature type="turn" evidence="4">
    <location>
        <begin position="117"/>
        <end position="120"/>
    </location>
</feature>
<feature type="helix" evidence="4">
    <location>
        <begin position="123"/>
        <end position="141"/>
    </location>
</feature>
<feature type="helix" evidence="4">
    <location>
        <begin position="143"/>
        <end position="160"/>
    </location>
</feature>
<feature type="turn" evidence="4">
    <location>
        <begin position="161"/>
        <end position="163"/>
    </location>
</feature>
<feature type="strand" evidence="4">
    <location>
        <begin position="165"/>
        <end position="170"/>
    </location>
</feature>
<feature type="strand" evidence="4">
    <location>
        <begin position="173"/>
        <end position="179"/>
    </location>
</feature>
<feature type="helix" evidence="4">
    <location>
        <begin position="180"/>
        <end position="200"/>
    </location>
</feature>
<feature type="strand" evidence="4">
    <location>
        <begin position="210"/>
        <end position="213"/>
    </location>
</feature>
<feature type="helix" evidence="4">
    <location>
        <begin position="215"/>
        <end position="220"/>
    </location>
</feature>
<feature type="helix" evidence="4">
    <location>
        <begin position="226"/>
        <end position="235"/>
    </location>
</feature>
<feature type="strand" evidence="4">
    <location>
        <begin position="247"/>
        <end position="249"/>
    </location>
</feature>
<feature type="helix" evidence="4">
    <location>
        <begin position="253"/>
        <end position="281"/>
    </location>
</feature>
<feature type="strand" evidence="4">
    <location>
        <begin position="284"/>
        <end position="287"/>
    </location>
</feature>
<feature type="helix" evidence="4">
    <location>
        <begin position="306"/>
        <end position="328"/>
    </location>
</feature>
<feature type="helix" evidence="4">
    <location>
        <begin position="339"/>
        <end position="344"/>
    </location>
</feature>
<feature type="helix" evidence="4">
    <location>
        <begin position="347"/>
        <end position="365"/>
    </location>
</feature>
<feature type="strand" evidence="4">
    <location>
        <begin position="368"/>
        <end position="370"/>
    </location>
</feature>
<feature type="helix" evidence="4">
    <location>
        <begin position="372"/>
        <end position="380"/>
    </location>
</feature>
<feature type="helix" evidence="4">
    <location>
        <begin position="383"/>
        <end position="386"/>
    </location>
</feature>
<feature type="helix" evidence="4">
    <location>
        <begin position="387"/>
        <end position="396"/>
    </location>
</feature>
<feature type="helix" evidence="5">
    <location>
        <begin position="402"/>
        <end position="410"/>
    </location>
</feature>
<feature type="helix" evidence="4">
    <location>
        <begin position="417"/>
        <end position="425"/>
    </location>
</feature>
<feature type="strand" evidence="4">
    <location>
        <begin position="427"/>
        <end position="429"/>
    </location>
</feature>
<feature type="helix" evidence="4">
    <location>
        <begin position="431"/>
        <end position="438"/>
    </location>
</feature>
<feature type="helix" evidence="4">
    <location>
        <begin position="442"/>
        <end position="444"/>
    </location>
</feature>
<feature type="helix" evidence="4">
    <location>
        <begin position="449"/>
        <end position="454"/>
    </location>
</feature>